<reference key="1">
    <citation type="journal article" date="2001" name="Nature">
        <title>Genome sequence of enterohaemorrhagic Escherichia coli O157:H7.</title>
        <authorList>
            <person name="Perna N.T."/>
            <person name="Plunkett G. III"/>
            <person name="Burland V."/>
            <person name="Mau B."/>
            <person name="Glasner J.D."/>
            <person name="Rose D.J."/>
            <person name="Mayhew G.F."/>
            <person name="Evans P.S."/>
            <person name="Gregor J."/>
            <person name="Kirkpatrick H.A."/>
            <person name="Posfai G."/>
            <person name="Hackett J."/>
            <person name="Klink S."/>
            <person name="Boutin A."/>
            <person name="Shao Y."/>
            <person name="Miller L."/>
            <person name="Grotbeck E.J."/>
            <person name="Davis N.W."/>
            <person name="Lim A."/>
            <person name="Dimalanta E.T."/>
            <person name="Potamousis K."/>
            <person name="Apodaca J."/>
            <person name="Anantharaman T.S."/>
            <person name="Lin J."/>
            <person name="Yen G."/>
            <person name="Schwartz D.C."/>
            <person name="Welch R.A."/>
            <person name="Blattner F.R."/>
        </authorList>
    </citation>
    <scope>NUCLEOTIDE SEQUENCE [LARGE SCALE GENOMIC DNA]</scope>
    <source>
        <strain>O157:H7 / EDL933 / ATCC 700927 / EHEC</strain>
    </source>
</reference>
<reference key="2">
    <citation type="journal article" date="2001" name="DNA Res.">
        <title>Complete genome sequence of enterohemorrhagic Escherichia coli O157:H7 and genomic comparison with a laboratory strain K-12.</title>
        <authorList>
            <person name="Hayashi T."/>
            <person name="Makino K."/>
            <person name="Ohnishi M."/>
            <person name="Kurokawa K."/>
            <person name="Ishii K."/>
            <person name="Yokoyama K."/>
            <person name="Han C.-G."/>
            <person name="Ohtsubo E."/>
            <person name="Nakayama K."/>
            <person name="Murata T."/>
            <person name="Tanaka M."/>
            <person name="Tobe T."/>
            <person name="Iida T."/>
            <person name="Takami H."/>
            <person name="Honda T."/>
            <person name="Sasakawa C."/>
            <person name="Ogasawara N."/>
            <person name="Yasunaga T."/>
            <person name="Kuhara S."/>
            <person name="Shiba T."/>
            <person name="Hattori M."/>
            <person name="Shinagawa H."/>
        </authorList>
    </citation>
    <scope>NUCLEOTIDE SEQUENCE [LARGE SCALE GENOMIC DNA]</scope>
    <source>
        <strain>O157:H7 / Sakai / RIMD 0509952 / EHEC</strain>
    </source>
</reference>
<organism>
    <name type="scientific">Escherichia coli O157:H7</name>
    <dbReference type="NCBI Taxonomy" id="83334"/>
    <lineage>
        <taxon>Bacteria</taxon>
        <taxon>Pseudomonadati</taxon>
        <taxon>Pseudomonadota</taxon>
        <taxon>Gammaproteobacteria</taxon>
        <taxon>Enterobacterales</taxon>
        <taxon>Enterobacteriaceae</taxon>
        <taxon>Escherichia</taxon>
    </lineage>
</organism>
<sequence>MWSEYSLEVVDAVARNGSFSAAAQELHRVPSAVSYTVRQLEEWLAVPLFERRHRDVELTAAGAWFLKEGRSVVKKMQITRQQCQQIANGWRGQLAIAVDNIVRPERTRQMIVDFYRHFDDVELLVFQEVFNGVWDALSDGRVELAIGATRAIPVGGRYAFRDMGMLSWSCVVASHHPLALMDGPFSDDTLRNWPSLVREDTSRTLPKRITWLLDNQKRVVVPDWESSATCISAGLCIGMVPTHFAKPWLNEGKWVALELENPFPDSACCLTWQQNDMSPALTWLLEYLGDSETLNKEWLREPEETPATGD</sequence>
<accession>P0ACR3</accession>
<accession>P37598</accession>
<accession>P77677</accession>
<gene>
    <name evidence="1" type="primary">punR</name>
    <name type="synonym">ydhB</name>
    <name type="ordered locus">Z2682</name>
    <name type="ordered locus">ECs2368</name>
</gene>
<dbReference type="EMBL" id="AE005174">
    <property type="protein sequence ID" value="AAG56648.1"/>
    <property type="molecule type" value="Genomic_DNA"/>
</dbReference>
<dbReference type="EMBL" id="BA000007">
    <property type="protein sequence ID" value="BAB35791.1"/>
    <property type="molecule type" value="Genomic_DNA"/>
</dbReference>
<dbReference type="PIR" id="D85773">
    <property type="entry name" value="D85773"/>
</dbReference>
<dbReference type="PIR" id="H90924">
    <property type="entry name" value="H90924"/>
</dbReference>
<dbReference type="RefSeq" id="NP_310395.1">
    <property type="nucleotide sequence ID" value="NC_002695.1"/>
</dbReference>
<dbReference type="SMR" id="P0ACR3"/>
<dbReference type="STRING" id="155864.Z2682"/>
<dbReference type="GeneID" id="912285"/>
<dbReference type="KEGG" id="ece:Z2682"/>
<dbReference type="KEGG" id="ecs:ECs_2368"/>
<dbReference type="PATRIC" id="fig|386585.9.peg.2480"/>
<dbReference type="eggNOG" id="COG0583">
    <property type="taxonomic scope" value="Bacteria"/>
</dbReference>
<dbReference type="HOGENOM" id="CLU_039613_35_1_6"/>
<dbReference type="OMA" id="PKRTTWL"/>
<dbReference type="Proteomes" id="UP000000558">
    <property type="component" value="Chromosome"/>
</dbReference>
<dbReference type="Proteomes" id="UP000002519">
    <property type="component" value="Chromosome"/>
</dbReference>
<dbReference type="GO" id="GO:0003700">
    <property type="term" value="F:DNA-binding transcription factor activity"/>
    <property type="evidence" value="ECO:0007669"/>
    <property type="project" value="InterPro"/>
</dbReference>
<dbReference type="GO" id="GO:0000976">
    <property type="term" value="F:transcription cis-regulatory region binding"/>
    <property type="evidence" value="ECO:0007669"/>
    <property type="project" value="TreeGrafter"/>
</dbReference>
<dbReference type="FunFam" id="1.10.10.10:FF:000001">
    <property type="entry name" value="LysR family transcriptional regulator"/>
    <property type="match status" value="1"/>
</dbReference>
<dbReference type="Gene3D" id="3.40.190.10">
    <property type="entry name" value="Periplasmic binding protein-like II"/>
    <property type="match status" value="2"/>
</dbReference>
<dbReference type="Gene3D" id="1.10.10.10">
    <property type="entry name" value="Winged helix-like DNA-binding domain superfamily/Winged helix DNA-binding domain"/>
    <property type="match status" value="1"/>
</dbReference>
<dbReference type="InterPro" id="IPR005119">
    <property type="entry name" value="LysR_subst-bd"/>
</dbReference>
<dbReference type="InterPro" id="IPR000847">
    <property type="entry name" value="Tscrpt_reg_HTH_LysR"/>
</dbReference>
<dbReference type="InterPro" id="IPR036388">
    <property type="entry name" value="WH-like_DNA-bd_sf"/>
</dbReference>
<dbReference type="InterPro" id="IPR036390">
    <property type="entry name" value="WH_DNA-bd_sf"/>
</dbReference>
<dbReference type="NCBIfam" id="NF008294">
    <property type="entry name" value="PRK11074.1"/>
    <property type="match status" value="1"/>
</dbReference>
<dbReference type="PANTHER" id="PTHR30126">
    <property type="entry name" value="HTH-TYPE TRANSCRIPTIONAL REGULATOR"/>
    <property type="match status" value="1"/>
</dbReference>
<dbReference type="PANTHER" id="PTHR30126:SF18">
    <property type="entry name" value="LYSR FAMILY TRANSCRIPTIONAL REGULATOR"/>
    <property type="match status" value="1"/>
</dbReference>
<dbReference type="Pfam" id="PF00126">
    <property type="entry name" value="HTH_1"/>
    <property type="match status" value="1"/>
</dbReference>
<dbReference type="Pfam" id="PF03466">
    <property type="entry name" value="LysR_substrate"/>
    <property type="match status" value="1"/>
</dbReference>
<dbReference type="SUPFAM" id="SSF53850">
    <property type="entry name" value="Periplasmic binding protein-like II"/>
    <property type="match status" value="1"/>
</dbReference>
<dbReference type="SUPFAM" id="SSF46785">
    <property type="entry name" value="Winged helix' DNA-binding domain"/>
    <property type="match status" value="1"/>
</dbReference>
<dbReference type="PROSITE" id="PS50931">
    <property type="entry name" value="HTH_LYSR"/>
    <property type="match status" value="1"/>
</dbReference>
<comment type="function">
    <text evidence="1">Transcriptional regulator that activates the expression of punC, which encodes a purine nucleoside transporter.</text>
</comment>
<comment type="subcellular location">
    <subcellularLocation>
        <location evidence="3">Cytoplasm</location>
    </subcellularLocation>
</comment>
<comment type="similarity">
    <text evidence="3">Belongs to the LysR transcriptional regulatory family.</text>
</comment>
<proteinExistence type="inferred from homology"/>
<evidence type="ECO:0000250" key="1">
    <source>
        <dbReference type="UniProtKB" id="P0ACR2"/>
    </source>
</evidence>
<evidence type="ECO:0000255" key="2">
    <source>
        <dbReference type="PROSITE-ProRule" id="PRU00253"/>
    </source>
</evidence>
<evidence type="ECO:0000305" key="3"/>
<keyword id="KW-0010">Activator</keyword>
<keyword id="KW-0963">Cytoplasm</keyword>
<keyword id="KW-0238">DNA-binding</keyword>
<keyword id="KW-1185">Reference proteome</keyword>
<keyword id="KW-0804">Transcription</keyword>
<keyword id="KW-0805">Transcription regulation</keyword>
<protein>
    <recommendedName>
        <fullName evidence="1">HTH-type transcriptional regulator PunR</fullName>
    </recommendedName>
</protein>
<name>PUNR_ECO57</name>
<feature type="chain" id="PRO_0000105785" description="HTH-type transcriptional regulator PunR">
    <location>
        <begin position="1"/>
        <end position="310"/>
    </location>
</feature>
<feature type="domain" description="HTH lysR-type" evidence="2">
    <location>
        <begin position="2"/>
        <end position="59"/>
    </location>
</feature>
<feature type="DNA-binding region" description="H-T-H motif" evidence="2">
    <location>
        <begin position="19"/>
        <end position="38"/>
    </location>
</feature>